<sequence>MMIPELGRRPMHRGNEDSSFGDDYEKEIGVLLGEQQRRQVEADELERELNLYRSGSAPPTVDGSLSAAGGLFSGGGGASFLEFGGVNKGNGFGGDDEEFRKDPAYLSYYYANMKLNPRLPPPLMSREDLRVAQRLKGSNNVLGGVGDRRKVNDSRSLFSMPPGFEAGKPGASASEWDANGLIGLGLGGKQKSFADIFQADMGHPVVQQPSRPASRNTFDENVDSNNNLSPSASQGIGAPSPYCYAAVLGSSLSRNGTPDPQGIARVPSPCLTPIGSGRVSSNDKRNTSNQSPFNGVTSGLNESSDLVNALSGLNLSGTGGLDERGQAEQDVEKVRNYMFGLQDGHNEVNPHGFPNRSDQARGTASCRNSQMRGSQGSAYNSGSGVANPYQHHDSPNYYALNPAVASMMANQLGTNNYSPMYENASATLGYSAMDSRLHGGSFVSSGQNLSESRNIGRVGNRMMEGGTGHPSHLADPMYHQYARFSENADSFDLLNDPSMDRNYGNSYMNMLEIQRAYLGSQKSQYGLPYKSGSPNSHSYYGSPTFGSNMSYPGSPLAHHGMPNSLMSPYSPMRRGEVNMRYPAATRNYTGGVMGSWHMDASLDEGFGSSMLEEFKSNKTRGFELSEIAGHVVEFSSDQYGSRFIQQKLETATTDEKNMVYEEIMPKALALMTDVFGNYVIQKFFEHGLPPQRRELGEKLIDNVLPLSLQMYGCRVIQKAIEVVDLDQKIQMVKELDGHVMRCVRDQNGNHVVQKCIECVPEENIEFIISTFFGHVVTLSTHPYGCRVIQRVLEHCHNPDTQSKVMEEILSTVSMLTQDQYGNYVVQHVLEHGKPDERTVIIKELAGKIVQMSQQKFASNVVEKCLTFGGPEERELLVNEMLGTTDENEPLQAMMKDQFANYVVQKVLETCDDQQRELILTRIKVHLNALKKYTYGKHIVARVEKLVAAGERRMALQSLPQPLVA</sequence>
<feature type="chain" id="PRO_0000401385" description="Pumilio homolog 3">
    <location>
        <begin position="1"/>
        <end position="964"/>
    </location>
</feature>
<feature type="domain" description="PUM-HD" evidence="3">
    <location>
        <begin position="606"/>
        <end position="946"/>
    </location>
</feature>
<feature type="repeat" description="Pumilio 1">
    <location>
        <begin position="626"/>
        <end position="661"/>
    </location>
</feature>
<feature type="repeat" description="Pumilio 2">
    <location>
        <begin position="662"/>
        <end position="697"/>
    </location>
</feature>
<feature type="repeat" description="Pumilio 3">
    <location>
        <begin position="698"/>
        <end position="733"/>
    </location>
</feature>
<feature type="repeat" description="Pumilio 4">
    <location>
        <begin position="734"/>
        <end position="769"/>
    </location>
</feature>
<feature type="repeat" description="Pumilio 5">
    <location>
        <begin position="770"/>
        <end position="806"/>
    </location>
</feature>
<feature type="repeat" description="Pumilio 6">
    <location>
        <begin position="807"/>
        <end position="842"/>
    </location>
</feature>
<feature type="repeat" description="Pumilio 7">
    <location>
        <begin position="843"/>
        <end position="878"/>
    </location>
</feature>
<feature type="repeat" description="Pumilio 8">
    <location>
        <begin position="879"/>
        <end position="920"/>
    </location>
</feature>
<feature type="region of interest" description="Disordered" evidence="4">
    <location>
        <begin position="1"/>
        <end position="22"/>
    </location>
</feature>
<feature type="region of interest" description="Disordered" evidence="4">
    <location>
        <begin position="204"/>
        <end position="235"/>
    </location>
</feature>
<feature type="region of interest" description="Disordered" evidence="4">
    <location>
        <begin position="256"/>
        <end position="300"/>
    </location>
</feature>
<feature type="region of interest" description="Disordered" evidence="4">
    <location>
        <begin position="343"/>
        <end position="388"/>
    </location>
</feature>
<feature type="compositionally biased region" description="Polar residues" evidence="4">
    <location>
        <begin position="207"/>
        <end position="216"/>
    </location>
</feature>
<feature type="compositionally biased region" description="Polar residues" evidence="4">
    <location>
        <begin position="223"/>
        <end position="234"/>
    </location>
</feature>
<feature type="compositionally biased region" description="Polar residues" evidence="4">
    <location>
        <begin position="287"/>
        <end position="300"/>
    </location>
</feature>
<feature type="compositionally biased region" description="Polar residues" evidence="4">
    <location>
        <begin position="356"/>
        <end position="384"/>
    </location>
</feature>
<feature type="modified residue" description="Phosphoserine" evidence="2">
    <location>
        <position position="192"/>
    </location>
</feature>
<feature type="modified residue" description="Phosphothreonine" evidence="7">
    <location>
        <position position="257"/>
    </location>
</feature>
<protein>
    <recommendedName>
        <fullName>Pumilio homolog 3</fullName>
        <shortName>APUM-3</shortName>
        <shortName>AtPUM3</shortName>
    </recommendedName>
</protein>
<comment type="function">
    <text evidence="5">Sequence-specific RNA-binding protein that regulates translation and mRNA stability by binding the 3'-UTR of target mRNAs. Binds the APUM-binding elements (APBEs) in the 3'-UTR mRNA sequence of CLV1, PNH, WUS and FAS2.</text>
</comment>
<comment type="subcellular location">
    <subcellularLocation>
        <location evidence="6">Cytoplasm</location>
    </subcellularLocation>
</comment>
<comment type="domain">
    <text evidence="1">The pumilio repeats mediate the association with RNA by packing together to form a right-handed superhelix that approximates a half donut. The number as well as the specific sequence of the repeats determine the specificity for target mRNAs (By similarity).</text>
</comment>
<evidence type="ECO:0000250" key="1"/>
<evidence type="ECO:0000250" key="2">
    <source>
        <dbReference type="UniProtKB" id="Q9SS47"/>
    </source>
</evidence>
<evidence type="ECO:0000255" key="3">
    <source>
        <dbReference type="PROSITE-ProRule" id="PRU00318"/>
    </source>
</evidence>
<evidence type="ECO:0000256" key="4">
    <source>
        <dbReference type="SAM" id="MobiDB-lite"/>
    </source>
</evidence>
<evidence type="ECO:0000269" key="5">
    <source>
    </source>
</evidence>
<evidence type="ECO:0000305" key="6"/>
<evidence type="ECO:0007744" key="7">
    <source>
    </source>
</evidence>
<proteinExistence type="evidence at protein level"/>
<keyword id="KW-0963">Cytoplasm</keyword>
<keyword id="KW-0597">Phosphoprotein</keyword>
<keyword id="KW-1185">Reference proteome</keyword>
<keyword id="KW-0677">Repeat</keyword>
<keyword id="KW-0694">RNA-binding</keyword>
<keyword id="KW-0810">Translation regulation</keyword>
<reference key="1">
    <citation type="journal article" date="1999" name="Nature">
        <title>Sequence and analysis of chromosome 2 of the plant Arabidopsis thaliana.</title>
        <authorList>
            <person name="Lin X."/>
            <person name="Kaul S."/>
            <person name="Rounsley S.D."/>
            <person name="Shea T.P."/>
            <person name="Benito M.-I."/>
            <person name="Town C.D."/>
            <person name="Fujii C.Y."/>
            <person name="Mason T.M."/>
            <person name="Bowman C.L."/>
            <person name="Barnstead M.E."/>
            <person name="Feldblyum T.V."/>
            <person name="Buell C.R."/>
            <person name="Ketchum K.A."/>
            <person name="Lee J.J."/>
            <person name="Ronning C.M."/>
            <person name="Koo H.L."/>
            <person name="Moffat K.S."/>
            <person name="Cronin L.A."/>
            <person name="Shen M."/>
            <person name="Pai G."/>
            <person name="Van Aken S."/>
            <person name="Umayam L."/>
            <person name="Tallon L.J."/>
            <person name="Gill J.E."/>
            <person name="Adams M.D."/>
            <person name="Carrera A.J."/>
            <person name="Creasy T.H."/>
            <person name="Goodman H.M."/>
            <person name="Somerville C.R."/>
            <person name="Copenhaver G.P."/>
            <person name="Preuss D."/>
            <person name="Nierman W.C."/>
            <person name="White O."/>
            <person name="Eisen J.A."/>
            <person name="Salzberg S.L."/>
            <person name="Fraser C.M."/>
            <person name="Venter J.C."/>
        </authorList>
    </citation>
    <scope>NUCLEOTIDE SEQUENCE [LARGE SCALE GENOMIC DNA]</scope>
    <source>
        <strain>cv. Columbia</strain>
    </source>
</reference>
<reference key="2">
    <citation type="journal article" date="2017" name="Plant J.">
        <title>Araport11: a complete reannotation of the Arabidopsis thaliana reference genome.</title>
        <authorList>
            <person name="Cheng C.Y."/>
            <person name="Krishnakumar V."/>
            <person name="Chan A.P."/>
            <person name="Thibaud-Nissen F."/>
            <person name="Schobel S."/>
            <person name="Town C.D."/>
        </authorList>
    </citation>
    <scope>GENOME REANNOTATION</scope>
    <source>
        <strain>cv. Columbia</strain>
    </source>
</reference>
<reference key="3">
    <citation type="journal article" date="2009" name="FEBS J.">
        <title>Molecular characterization of Arabidopsis thaliana PUF proteins -- binding specificity and target candidates.</title>
        <authorList>
            <person name="Francischini C.W."/>
            <person name="Quaggio R.B."/>
        </authorList>
    </citation>
    <scope>GENE FAMILY</scope>
    <scope>FUNCTION</scope>
    <scope>RNA-BINDING</scope>
</reference>
<reference key="4">
    <citation type="journal article" date="2009" name="Plant Physiol.">
        <title>Large-scale Arabidopsis phosphoproteome profiling reveals novel chloroplast kinase substrates and phosphorylation networks.</title>
        <authorList>
            <person name="Reiland S."/>
            <person name="Messerli G."/>
            <person name="Baerenfaller K."/>
            <person name="Gerrits B."/>
            <person name="Endler A."/>
            <person name="Grossmann J."/>
            <person name="Gruissem W."/>
            <person name="Baginsky S."/>
        </authorList>
    </citation>
    <scope>PHOSPHORYLATION [LARGE SCALE ANALYSIS] AT THR-257</scope>
    <scope>IDENTIFICATION BY MASS SPECTROMETRY [LARGE SCALE ANALYSIS]</scope>
</reference>
<reference key="5">
    <citation type="journal article" date="2010" name="BMC Plant Biol.">
        <title>The Puf family of RNA-binding proteins in plants: phylogeny, structural modeling, activity and subcellular localization.</title>
        <authorList>
            <person name="Tam P.P."/>
            <person name="Barrette-Ng I.H."/>
            <person name="Simon D.M."/>
            <person name="Tam M.W."/>
            <person name="Ang A.L."/>
            <person name="Muench D.G."/>
        </authorList>
    </citation>
    <scope>GENE FAMILY</scope>
</reference>
<name>PUM3_ARATH</name>
<organism>
    <name type="scientific">Arabidopsis thaliana</name>
    <name type="common">Mouse-ear cress</name>
    <dbReference type="NCBI Taxonomy" id="3702"/>
    <lineage>
        <taxon>Eukaryota</taxon>
        <taxon>Viridiplantae</taxon>
        <taxon>Streptophyta</taxon>
        <taxon>Embryophyta</taxon>
        <taxon>Tracheophyta</taxon>
        <taxon>Spermatophyta</taxon>
        <taxon>Magnoliopsida</taxon>
        <taxon>eudicotyledons</taxon>
        <taxon>Gunneridae</taxon>
        <taxon>Pentapetalae</taxon>
        <taxon>rosids</taxon>
        <taxon>malvids</taxon>
        <taxon>Brassicales</taxon>
        <taxon>Brassicaceae</taxon>
        <taxon>Camelineae</taxon>
        <taxon>Arabidopsis</taxon>
    </lineage>
</organism>
<gene>
    <name type="primary">APUM3</name>
    <name type="ordered locus">At2g29140</name>
    <name type="ORF">F16P2.48</name>
</gene>
<accession>Q9ZW02</accession>
<dbReference type="EMBL" id="AC004561">
    <property type="protein sequence ID" value="AAC95220.1"/>
    <property type="molecule type" value="Genomic_DNA"/>
</dbReference>
<dbReference type="EMBL" id="CP002685">
    <property type="protein sequence ID" value="AEC08216.1"/>
    <property type="molecule type" value="Genomic_DNA"/>
</dbReference>
<dbReference type="EMBL" id="CP002685">
    <property type="protein sequence ID" value="ANM61937.1"/>
    <property type="molecule type" value="Genomic_DNA"/>
</dbReference>
<dbReference type="PIR" id="A84693">
    <property type="entry name" value="A84693"/>
</dbReference>
<dbReference type="RefSeq" id="NP_001324126.1">
    <property type="nucleotide sequence ID" value="NM_001336202.1"/>
</dbReference>
<dbReference type="RefSeq" id="NP_180478.1">
    <property type="nucleotide sequence ID" value="NM_128471.4"/>
</dbReference>
<dbReference type="SMR" id="Q9ZW02"/>
<dbReference type="BioGRID" id="2813">
    <property type="interactions" value="1"/>
</dbReference>
<dbReference type="FunCoup" id="Q9ZW02">
    <property type="interactions" value="785"/>
</dbReference>
<dbReference type="STRING" id="3702.Q9ZW02"/>
<dbReference type="iPTMnet" id="Q9ZW02"/>
<dbReference type="PaxDb" id="3702-AT2G29140.1"/>
<dbReference type="ProteomicsDB" id="226356"/>
<dbReference type="EnsemblPlants" id="AT2G29140.1">
    <property type="protein sequence ID" value="AT2G29140.1"/>
    <property type="gene ID" value="AT2G29140"/>
</dbReference>
<dbReference type="EnsemblPlants" id="AT2G29140.2">
    <property type="protein sequence ID" value="AT2G29140.2"/>
    <property type="gene ID" value="AT2G29140"/>
</dbReference>
<dbReference type="GeneID" id="817463"/>
<dbReference type="Gramene" id="AT2G29140.1">
    <property type="protein sequence ID" value="AT2G29140.1"/>
    <property type="gene ID" value="AT2G29140"/>
</dbReference>
<dbReference type="Gramene" id="AT2G29140.2">
    <property type="protein sequence ID" value="AT2G29140.2"/>
    <property type="gene ID" value="AT2G29140"/>
</dbReference>
<dbReference type="KEGG" id="ath:AT2G29140"/>
<dbReference type="Araport" id="AT2G29140"/>
<dbReference type="TAIR" id="AT2G29140">
    <property type="gene designation" value="PUM3"/>
</dbReference>
<dbReference type="eggNOG" id="KOG1488">
    <property type="taxonomic scope" value="Eukaryota"/>
</dbReference>
<dbReference type="HOGENOM" id="CLU_004017_1_1_1"/>
<dbReference type="InParanoid" id="Q9ZW02"/>
<dbReference type="OMA" id="CENFGSA"/>
<dbReference type="PhylomeDB" id="Q9ZW02"/>
<dbReference type="PRO" id="PR:Q9ZW02"/>
<dbReference type="Proteomes" id="UP000006548">
    <property type="component" value="Chromosome 2"/>
</dbReference>
<dbReference type="ExpressionAtlas" id="Q9ZW02">
    <property type="expression patterns" value="baseline and differential"/>
</dbReference>
<dbReference type="GO" id="GO:0005737">
    <property type="term" value="C:cytoplasm"/>
    <property type="evidence" value="ECO:0007669"/>
    <property type="project" value="UniProtKB-SubCell"/>
</dbReference>
<dbReference type="GO" id="GO:0003729">
    <property type="term" value="F:mRNA binding"/>
    <property type="evidence" value="ECO:0000314"/>
    <property type="project" value="UniProtKB"/>
</dbReference>
<dbReference type="GO" id="GO:0006417">
    <property type="term" value="P:regulation of translation"/>
    <property type="evidence" value="ECO:0007669"/>
    <property type="project" value="UniProtKB-KW"/>
</dbReference>
<dbReference type="CDD" id="cd07920">
    <property type="entry name" value="Pumilio"/>
    <property type="match status" value="1"/>
</dbReference>
<dbReference type="FunFam" id="1.25.10.10:FF:000004">
    <property type="entry name" value="Pumilio homolog 1 isoform 2"/>
    <property type="match status" value="1"/>
</dbReference>
<dbReference type="Gene3D" id="1.25.10.10">
    <property type="entry name" value="Leucine-rich Repeat Variant"/>
    <property type="match status" value="1"/>
</dbReference>
<dbReference type="InterPro" id="IPR011989">
    <property type="entry name" value="ARM-like"/>
</dbReference>
<dbReference type="InterPro" id="IPR016024">
    <property type="entry name" value="ARM-type_fold"/>
</dbReference>
<dbReference type="InterPro" id="IPR012940">
    <property type="entry name" value="NABP"/>
</dbReference>
<dbReference type="InterPro" id="IPR033133">
    <property type="entry name" value="PUM-HD"/>
</dbReference>
<dbReference type="InterPro" id="IPR033712">
    <property type="entry name" value="Pumilio_RNA-bd"/>
</dbReference>
<dbReference type="InterPro" id="IPR001313">
    <property type="entry name" value="Pumilio_RNA-bd_rpt"/>
</dbReference>
<dbReference type="PANTHER" id="PTHR12537:SF128">
    <property type="entry name" value="PUMILIO HOMOLOG 1-RELATED"/>
    <property type="match status" value="1"/>
</dbReference>
<dbReference type="PANTHER" id="PTHR12537">
    <property type="entry name" value="RNA BINDING PROTEIN PUMILIO-RELATED"/>
    <property type="match status" value="1"/>
</dbReference>
<dbReference type="Pfam" id="PF07990">
    <property type="entry name" value="NABP"/>
    <property type="match status" value="2"/>
</dbReference>
<dbReference type="Pfam" id="PF00806">
    <property type="entry name" value="PUF"/>
    <property type="match status" value="8"/>
</dbReference>
<dbReference type="SMART" id="SM00025">
    <property type="entry name" value="Pumilio"/>
    <property type="match status" value="8"/>
</dbReference>
<dbReference type="SUPFAM" id="SSF48371">
    <property type="entry name" value="ARM repeat"/>
    <property type="match status" value="1"/>
</dbReference>
<dbReference type="PROSITE" id="PS50302">
    <property type="entry name" value="PUM"/>
    <property type="match status" value="9"/>
</dbReference>
<dbReference type="PROSITE" id="PS50303">
    <property type="entry name" value="PUM_HD"/>
    <property type="match status" value="1"/>
</dbReference>